<accession>Q1GDB7</accession>
<gene>
    <name evidence="1" type="primary">rpmE</name>
    <name type="ordered locus">TM1040_2617</name>
</gene>
<proteinExistence type="inferred from homology"/>
<comment type="function">
    <text evidence="1">Binds the 23S rRNA.</text>
</comment>
<comment type="subunit">
    <text evidence="1">Part of the 50S ribosomal subunit.</text>
</comment>
<comment type="similarity">
    <text evidence="1">Belongs to the bacterial ribosomal protein bL31 family. Type A subfamily.</text>
</comment>
<organism>
    <name type="scientific">Ruegeria sp. (strain TM1040)</name>
    <name type="common">Silicibacter sp.</name>
    <dbReference type="NCBI Taxonomy" id="292414"/>
    <lineage>
        <taxon>Bacteria</taxon>
        <taxon>Pseudomonadati</taxon>
        <taxon>Pseudomonadota</taxon>
        <taxon>Alphaproteobacteria</taxon>
        <taxon>Rhodobacterales</taxon>
        <taxon>Roseobacteraceae</taxon>
        <taxon>Ruegeria</taxon>
    </lineage>
</organism>
<sequence length="73" mass="8157">MKKDIHPDYHFIDVKMTDGTVVKMRSTWGNEGDQLALDIDPSAHPAWTGGSSRLMDTGGRVSKFKKKYEGLGF</sequence>
<dbReference type="EMBL" id="CP000377">
    <property type="protein sequence ID" value="ABF65349.1"/>
    <property type="molecule type" value="Genomic_DNA"/>
</dbReference>
<dbReference type="RefSeq" id="WP_011539931.1">
    <property type="nucleotide sequence ID" value="NC_008044.1"/>
</dbReference>
<dbReference type="SMR" id="Q1GDB7"/>
<dbReference type="STRING" id="292414.TM1040_2617"/>
<dbReference type="KEGG" id="sit:TM1040_2617"/>
<dbReference type="eggNOG" id="COG0254">
    <property type="taxonomic scope" value="Bacteria"/>
</dbReference>
<dbReference type="HOGENOM" id="CLU_114306_3_2_5"/>
<dbReference type="OrthoDB" id="9803251at2"/>
<dbReference type="Proteomes" id="UP000000636">
    <property type="component" value="Chromosome"/>
</dbReference>
<dbReference type="GO" id="GO:1990904">
    <property type="term" value="C:ribonucleoprotein complex"/>
    <property type="evidence" value="ECO:0007669"/>
    <property type="project" value="UniProtKB-KW"/>
</dbReference>
<dbReference type="GO" id="GO:0005840">
    <property type="term" value="C:ribosome"/>
    <property type="evidence" value="ECO:0007669"/>
    <property type="project" value="UniProtKB-KW"/>
</dbReference>
<dbReference type="GO" id="GO:0019843">
    <property type="term" value="F:rRNA binding"/>
    <property type="evidence" value="ECO:0007669"/>
    <property type="project" value="UniProtKB-KW"/>
</dbReference>
<dbReference type="GO" id="GO:0003735">
    <property type="term" value="F:structural constituent of ribosome"/>
    <property type="evidence" value="ECO:0007669"/>
    <property type="project" value="InterPro"/>
</dbReference>
<dbReference type="GO" id="GO:0006412">
    <property type="term" value="P:translation"/>
    <property type="evidence" value="ECO:0007669"/>
    <property type="project" value="UniProtKB-UniRule"/>
</dbReference>
<dbReference type="Gene3D" id="4.10.830.30">
    <property type="entry name" value="Ribosomal protein L31"/>
    <property type="match status" value="1"/>
</dbReference>
<dbReference type="HAMAP" id="MF_00501">
    <property type="entry name" value="Ribosomal_bL31_1"/>
    <property type="match status" value="1"/>
</dbReference>
<dbReference type="InterPro" id="IPR034704">
    <property type="entry name" value="Ribosomal_bL28/bL31-like_sf"/>
</dbReference>
<dbReference type="InterPro" id="IPR002150">
    <property type="entry name" value="Ribosomal_bL31"/>
</dbReference>
<dbReference type="InterPro" id="IPR027491">
    <property type="entry name" value="Ribosomal_bL31_A"/>
</dbReference>
<dbReference type="InterPro" id="IPR042105">
    <property type="entry name" value="Ribosomal_bL31_sf"/>
</dbReference>
<dbReference type="NCBIfam" id="TIGR00105">
    <property type="entry name" value="L31"/>
    <property type="match status" value="1"/>
</dbReference>
<dbReference type="NCBIfam" id="NF001809">
    <property type="entry name" value="PRK00528.1"/>
    <property type="match status" value="1"/>
</dbReference>
<dbReference type="PANTHER" id="PTHR33280">
    <property type="entry name" value="50S RIBOSOMAL PROTEIN L31, CHLOROPLASTIC"/>
    <property type="match status" value="1"/>
</dbReference>
<dbReference type="PANTHER" id="PTHR33280:SF6">
    <property type="entry name" value="LARGE RIBOSOMAL SUBUNIT PROTEIN BL31A"/>
    <property type="match status" value="1"/>
</dbReference>
<dbReference type="Pfam" id="PF01197">
    <property type="entry name" value="Ribosomal_L31"/>
    <property type="match status" value="1"/>
</dbReference>
<dbReference type="PRINTS" id="PR01249">
    <property type="entry name" value="RIBOSOMALL31"/>
</dbReference>
<dbReference type="SUPFAM" id="SSF143800">
    <property type="entry name" value="L28p-like"/>
    <property type="match status" value="1"/>
</dbReference>
<dbReference type="PROSITE" id="PS01143">
    <property type="entry name" value="RIBOSOMAL_L31"/>
    <property type="match status" value="1"/>
</dbReference>
<evidence type="ECO:0000255" key="1">
    <source>
        <dbReference type="HAMAP-Rule" id="MF_00501"/>
    </source>
</evidence>
<evidence type="ECO:0000305" key="2"/>
<feature type="chain" id="PRO_0000259230" description="Large ribosomal subunit protein bL31">
    <location>
        <begin position="1"/>
        <end position="73"/>
    </location>
</feature>
<reference key="1">
    <citation type="submission" date="2006-05" db="EMBL/GenBank/DDBJ databases">
        <title>Complete sequence of chromosome of Silicibacter sp. TM1040.</title>
        <authorList>
            <consortium name="US DOE Joint Genome Institute"/>
            <person name="Copeland A."/>
            <person name="Lucas S."/>
            <person name="Lapidus A."/>
            <person name="Barry K."/>
            <person name="Detter J.C."/>
            <person name="Glavina del Rio T."/>
            <person name="Hammon N."/>
            <person name="Israni S."/>
            <person name="Dalin E."/>
            <person name="Tice H."/>
            <person name="Pitluck S."/>
            <person name="Brettin T."/>
            <person name="Bruce D."/>
            <person name="Han C."/>
            <person name="Tapia R."/>
            <person name="Goodwin L."/>
            <person name="Thompson L.S."/>
            <person name="Gilna P."/>
            <person name="Schmutz J."/>
            <person name="Larimer F."/>
            <person name="Land M."/>
            <person name="Hauser L."/>
            <person name="Kyrpides N."/>
            <person name="Kim E."/>
            <person name="Belas R."/>
            <person name="Moran M.A."/>
            <person name="Buchan A."/>
            <person name="Gonzalez J.M."/>
            <person name="Schell M.A."/>
            <person name="Sun F."/>
            <person name="Richardson P."/>
        </authorList>
    </citation>
    <scope>NUCLEOTIDE SEQUENCE [LARGE SCALE GENOMIC DNA]</scope>
    <source>
        <strain>TM1040</strain>
    </source>
</reference>
<name>RL31_RUEST</name>
<keyword id="KW-1185">Reference proteome</keyword>
<keyword id="KW-0687">Ribonucleoprotein</keyword>
<keyword id="KW-0689">Ribosomal protein</keyword>
<keyword id="KW-0694">RNA-binding</keyword>
<keyword id="KW-0699">rRNA-binding</keyword>
<protein>
    <recommendedName>
        <fullName evidence="1">Large ribosomal subunit protein bL31</fullName>
    </recommendedName>
    <alternativeName>
        <fullName evidence="2">50S ribosomal protein L31</fullName>
    </alternativeName>
</protein>